<accession>A5CX27</accession>
<sequence length="466" mass="50987">MAKTLYNKLMDAHIIRENISTALIYIDRHLIHEVTSPQAFEGLSIANRKLWRKSTNLAVPDHNVPTTNRSSGVSSISDPISRIQIETLGRNCELFGIDEISMNDTRQGIVHIIGPEQGATFPGMSIVCGDSHTSTHGALGALAFGIGTSEVEHVLATNCLWQSKSKNFNIEVNGSLNQHVSAKDIALYIIGQLGTAGGMGFAIEFSGNTIQNLSIEGRMTLCNMAIEAGARIGMVAVDEKTINYVKDRPLAPSGIKWRKAVKYWRTLHSDKNAHFDKTMHFDAKDIKPQVTWGTSPDMVVATDGYVPNPNNAKNQTEKISWKNALNYMHLNANTKISDIKIDKIFIGSCTNSRIEDLRIAADILKDKKIANNIKLALVVPGSGIIKKQAEEEELDKIFINSGFEWREAGCSMCLAMNADKLEVGERCASTSNRNFEGRQGQGSFTHLVSPAIAASSAIAGYLSEVK</sequence>
<reference key="1">
    <citation type="journal article" date="2007" name="Curr. Biol.">
        <title>Reduced genome of the thioautotrophic intracellular symbiont in a deep-sea clam, Calyptogena okutanii.</title>
        <authorList>
            <person name="Kuwahara H."/>
            <person name="Yoshida T."/>
            <person name="Takaki Y."/>
            <person name="Shimamura S."/>
            <person name="Nishi S."/>
            <person name="Harada M."/>
            <person name="Matsuyama K."/>
            <person name="Takishita K."/>
            <person name="Kawato M."/>
            <person name="Uematsu K."/>
            <person name="Fujiwara Y."/>
            <person name="Sato T."/>
            <person name="Kato C."/>
            <person name="Kitagawa M."/>
            <person name="Kato I."/>
            <person name="Maruyama T."/>
        </authorList>
    </citation>
    <scope>NUCLEOTIDE SEQUENCE [LARGE SCALE GENOMIC DNA]</scope>
    <source>
        <strain>HA</strain>
    </source>
</reference>
<organism>
    <name type="scientific">Vesicomyosocius okutanii subsp. Calyptogena okutanii (strain HA)</name>
    <dbReference type="NCBI Taxonomy" id="412965"/>
    <lineage>
        <taxon>Bacteria</taxon>
        <taxon>Pseudomonadati</taxon>
        <taxon>Pseudomonadota</taxon>
        <taxon>Gammaproteobacteria</taxon>
        <taxon>Candidatus Pseudothioglobaceae</taxon>
        <taxon>Candidatus Vesicomyosocius</taxon>
    </lineage>
</organism>
<dbReference type="EC" id="4.2.1.33" evidence="1"/>
<dbReference type="EMBL" id="AP009247">
    <property type="protein sequence ID" value="BAF61475.1"/>
    <property type="molecule type" value="Genomic_DNA"/>
</dbReference>
<dbReference type="RefSeq" id="WP_011929745.1">
    <property type="nucleotide sequence ID" value="NC_009465.1"/>
</dbReference>
<dbReference type="SMR" id="A5CX27"/>
<dbReference type="STRING" id="412965.COSY_0350"/>
<dbReference type="KEGG" id="vok:COSY_0350"/>
<dbReference type="eggNOG" id="COG0065">
    <property type="taxonomic scope" value="Bacteria"/>
</dbReference>
<dbReference type="HOGENOM" id="CLU_006714_3_4_6"/>
<dbReference type="OrthoDB" id="9802769at2"/>
<dbReference type="UniPathway" id="UPA00048">
    <property type="reaction ID" value="UER00071"/>
</dbReference>
<dbReference type="Proteomes" id="UP000000247">
    <property type="component" value="Chromosome"/>
</dbReference>
<dbReference type="GO" id="GO:0003861">
    <property type="term" value="F:3-isopropylmalate dehydratase activity"/>
    <property type="evidence" value="ECO:0007669"/>
    <property type="project" value="UniProtKB-UniRule"/>
</dbReference>
<dbReference type="GO" id="GO:0051539">
    <property type="term" value="F:4 iron, 4 sulfur cluster binding"/>
    <property type="evidence" value="ECO:0007669"/>
    <property type="project" value="UniProtKB-KW"/>
</dbReference>
<dbReference type="GO" id="GO:0046872">
    <property type="term" value="F:metal ion binding"/>
    <property type="evidence" value="ECO:0007669"/>
    <property type="project" value="UniProtKB-KW"/>
</dbReference>
<dbReference type="GO" id="GO:0009098">
    <property type="term" value="P:L-leucine biosynthetic process"/>
    <property type="evidence" value="ECO:0007669"/>
    <property type="project" value="UniProtKB-UniRule"/>
</dbReference>
<dbReference type="CDD" id="cd01583">
    <property type="entry name" value="IPMI"/>
    <property type="match status" value="1"/>
</dbReference>
<dbReference type="FunFam" id="3.30.499.10:FF:000007">
    <property type="entry name" value="3-isopropylmalate dehydratase large subunit"/>
    <property type="match status" value="1"/>
</dbReference>
<dbReference type="Gene3D" id="3.30.499.10">
    <property type="entry name" value="Aconitase, domain 3"/>
    <property type="match status" value="2"/>
</dbReference>
<dbReference type="HAMAP" id="MF_01026">
    <property type="entry name" value="LeuC_type1"/>
    <property type="match status" value="1"/>
</dbReference>
<dbReference type="InterPro" id="IPR004430">
    <property type="entry name" value="3-IsopropMal_deHydase_lsu"/>
</dbReference>
<dbReference type="InterPro" id="IPR015931">
    <property type="entry name" value="Acnase/IPM_dHydase_lsu_aba_1/3"/>
</dbReference>
<dbReference type="InterPro" id="IPR001030">
    <property type="entry name" value="Acoase/IPM_deHydtase_lsu_aba"/>
</dbReference>
<dbReference type="InterPro" id="IPR018136">
    <property type="entry name" value="Aconitase_4Fe-4S_BS"/>
</dbReference>
<dbReference type="InterPro" id="IPR036008">
    <property type="entry name" value="Aconitase_4Fe-4S_dom"/>
</dbReference>
<dbReference type="InterPro" id="IPR050067">
    <property type="entry name" value="IPM_dehydratase_rel_enz"/>
</dbReference>
<dbReference type="InterPro" id="IPR033941">
    <property type="entry name" value="IPMI_cat"/>
</dbReference>
<dbReference type="NCBIfam" id="TIGR00170">
    <property type="entry name" value="leuC"/>
    <property type="match status" value="1"/>
</dbReference>
<dbReference type="NCBIfam" id="NF004016">
    <property type="entry name" value="PRK05478.1"/>
    <property type="match status" value="1"/>
</dbReference>
<dbReference type="NCBIfam" id="NF009116">
    <property type="entry name" value="PRK12466.1"/>
    <property type="match status" value="1"/>
</dbReference>
<dbReference type="PANTHER" id="PTHR43822:SF9">
    <property type="entry name" value="3-ISOPROPYLMALATE DEHYDRATASE"/>
    <property type="match status" value="1"/>
</dbReference>
<dbReference type="PANTHER" id="PTHR43822">
    <property type="entry name" value="HOMOACONITASE, MITOCHONDRIAL-RELATED"/>
    <property type="match status" value="1"/>
</dbReference>
<dbReference type="Pfam" id="PF00330">
    <property type="entry name" value="Aconitase"/>
    <property type="match status" value="1"/>
</dbReference>
<dbReference type="PRINTS" id="PR00415">
    <property type="entry name" value="ACONITASE"/>
</dbReference>
<dbReference type="SUPFAM" id="SSF53732">
    <property type="entry name" value="Aconitase iron-sulfur domain"/>
    <property type="match status" value="1"/>
</dbReference>
<dbReference type="PROSITE" id="PS00450">
    <property type="entry name" value="ACONITASE_1"/>
    <property type="match status" value="1"/>
</dbReference>
<dbReference type="PROSITE" id="PS01244">
    <property type="entry name" value="ACONITASE_2"/>
    <property type="match status" value="1"/>
</dbReference>
<comment type="function">
    <text evidence="1">Catalyzes the isomerization between 2-isopropylmalate and 3-isopropylmalate, via the formation of 2-isopropylmaleate.</text>
</comment>
<comment type="catalytic activity">
    <reaction evidence="1">
        <text>(2R,3S)-3-isopropylmalate = (2S)-2-isopropylmalate</text>
        <dbReference type="Rhea" id="RHEA:32287"/>
        <dbReference type="ChEBI" id="CHEBI:1178"/>
        <dbReference type="ChEBI" id="CHEBI:35121"/>
        <dbReference type="EC" id="4.2.1.33"/>
    </reaction>
</comment>
<comment type="cofactor">
    <cofactor evidence="1">
        <name>[4Fe-4S] cluster</name>
        <dbReference type="ChEBI" id="CHEBI:49883"/>
    </cofactor>
    <text evidence="1">Binds 1 [4Fe-4S] cluster per subunit.</text>
</comment>
<comment type="pathway">
    <text evidence="1">Amino-acid biosynthesis; L-leucine biosynthesis; L-leucine from 3-methyl-2-oxobutanoate: step 2/4.</text>
</comment>
<comment type="subunit">
    <text evidence="1">Heterodimer of LeuC and LeuD.</text>
</comment>
<comment type="similarity">
    <text evidence="1">Belongs to the aconitase/IPM isomerase family. LeuC type 1 subfamily.</text>
</comment>
<name>LEUC_VESOH</name>
<proteinExistence type="inferred from homology"/>
<keyword id="KW-0004">4Fe-4S</keyword>
<keyword id="KW-0028">Amino-acid biosynthesis</keyword>
<keyword id="KW-0100">Branched-chain amino acid biosynthesis</keyword>
<keyword id="KW-0408">Iron</keyword>
<keyword id="KW-0411">Iron-sulfur</keyword>
<keyword id="KW-0432">Leucine biosynthesis</keyword>
<keyword id="KW-0456">Lyase</keyword>
<keyword id="KW-0479">Metal-binding</keyword>
<keyword id="KW-1185">Reference proteome</keyword>
<protein>
    <recommendedName>
        <fullName evidence="1">3-isopropylmalate dehydratase large subunit</fullName>
        <ecNumber evidence="1">4.2.1.33</ecNumber>
    </recommendedName>
    <alternativeName>
        <fullName evidence="1">Alpha-IPM isomerase</fullName>
        <shortName evidence="1">IPMI</shortName>
    </alternativeName>
    <alternativeName>
        <fullName evidence="1">Isopropylmalate isomerase</fullName>
    </alternativeName>
</protein>
<gene>
    <name evidence="1" type="primary">leuC</name>
    <name type="ordered locus">COSY_0350</name>
</gene>
<feature type="chain" id="PRO_1000063630" description="3-isopropylmalate dehydratase large subunit">
    <location>
        <begin position="1"/>
        <end position="466"/>
    </location>
</feature>
<feature type="binding site" evidence="1">
    <location>
        <position position="349"/>
    </location>
    <ligand>
        <name>[4Fe-4S] cluster</name>
        <dbReference type="ChEBI" id="CHEBI:49883"/>
    </ligand>
</feature>
<feature type="binding site" evidence="1">
    <location>
        <position position="410"/>
    </location>
    <ligand>
        <name>[4Fe-4S] cluster</name>
        <dbReference type="ChEBI" id="CHEBI:49883"/>
    </ligand>
</feature>
<feature type="binding site" evidence="1">
    <location>
        <position position="413"/>
    </location>
    <ligand>
        <name>[4Fe-4S] cluster</name>
        <dbReference type="ChEBI" id="CHEBI:49883"/>
    </ligand>
</feature>
<evidence type="ECO:0000255" key="1">
    <source>
        <dbReference type="HAMAP-Rule" id="MF_01026"/>
    </source>
</evidence>